<keyword id="KW-0255">Endonuclease</keyword>
<keyword id="KW-0269">Exonuclease</keyword>
<keyword id="KW-0378">Hydrolase</keyword>
<keyword id="KW-0479">Metal-binding</keyword>
<keyword id="KW-0540">Nuclease</keyword>
<keyword id="KW-0819">tRNA processing</keyword>
<keyword id="KW-0862">Zinc</keyword>
<protein>
    <recommendedName>
        <fullName evidence="1">Ribonuclease BN</fullName>
        <shortName evidence="1">RNase BN</shortName>
        <ecNumber evidence="1">3.1.-.-</ecNumber>
    </recommendedName>
    <alternativeName>
        <fullName evidence="1">Ribonuclease Z homolog</fullName>
        <shortName evidence="1">RNase Z homolog</shortName>
    </alternativeName>
</protein>
<accession>Q1R9E5</accession>
<reference key="1">
    <citation type="journal article" date="2006" name="Proc. Natl. Acad. Sci. U.S.A.">
        <title>Identification of genes subject to positive selection in uropathogenic strains of Escherichia coli: a comparative genomics approach.</title>
        <authorList>
            <person name="Chen S.L."/>
            <person name="Hung C.-S."/>
            <person name="Xu J."/>
            <person name="Reigstad C.S."/>
            <person name="Magrini V."/>
            <person name="Sabo A."/>
            <person name="Blasiar D."/>
            <person name="Bieri T."/>
            <person name="Meyer R.R."/>
            <person name="Ozersky P."/>
            <person name="Armstrong J.R."/>
            <person name="Fulton R.S."/>
            <person name="Latreille J.P."/>
            <person name="Spieth J."/>
            <person name="Hooton T.M."/>
            <person name="Mardis E.R."/>
            <person name="Hultgren S.J."/>
            <person name="Gordon J.I."/>
        </authorList>
    </citation>
    <scope>NUCLEOTIDE SEQUENCE [LARGE SCALE GENOMIC DNA]</scope>
    <source>
        <strain>UTI89 / UPEC</strain>
    </source>
</reference>
<comment type="function">
    <text evidence="1">Zinc phosphodiesterase, which has both exoribonuclease and endoribonuclease activities.</text>
</comment>
<comment type="cofactor">
    <cofactor evidence="1">
        <name>Zn(2+)</name>
        <dbReference type="ChEBI" id="CHEBI:29105"/>
    </cofactor>
    <text evidence="1">Binds 2 Zn(2+) ions.</text>
</comment>
<comment type="subunit">
    <text evidence="1">Homodimer.</text>
</comment>
<comment type="similarity">
    <text evidence="1">Belongs to the RNase Z family. RNase BN subfamily.</text>
</comment>
<dbReference type="EC" id="3.1.-.-" evidence="1"/>
<dbReference type="EMBL" id="CP000243">
    <property type="protein sequence ID" value="ABE08019.1"/>
    <property type="molecule type" value="Genomic_DNA"/>
</dbReference>
<dbReference type="RefSeq" id="WP_000420115.1">
    <property type="nucleotide sequence ID" value="NZ_CP064825.1"/>
</dbReference>
<dbReference type="SMR" id="Q1R9E5"/>
<dbReference type="KEGG" id="eci:UTI89_C2552"/>
<dbReference type="HOGENOM" id="CLU_031317_2_0_6"/>
<dbReference type="Proteomes" id="UP000001952">
    <property type="component" value="Chromosome"/>
</dbReference>
<dbReference type="GO" id="GO:0042781">
    <property type="term" value="F:3'-tRNA processing endoribonuclease activity"/>
    <property type="evidence" value="ECO:0007669"/>
    <property type="project" value="TreeGrafter"/>
</dbReference>
<dbReference type="GO" id="GO:0004527">
    <property type="term" value="F:exonuclease activity"/>
    <property type="evidence" value="ECO:0007669"/>
    <property type="project" value="UniProtKB-UniRule"/>
</dbReference>
<dbReference type="GO" id="GO:0008270">
    <property type="term" value="F:zinc ion binding"/>
    <property type="evidence" value="ECO:0007669"/>
    <property type="project" value="UniProtKB-UniRule"/>
</dbReference>
<dbReference type="CDD" id="cd07717">
    <property type="entry name" value="RNaseZ_ZiPD-like_MBL-fold"/>
    <property type="match status" value="1"/>
</dbReference>
<dbReference type="FunFam" id="3.60.15.10:FF:000002">
    <property type="entry name" value="Ribonuclease Z"/>
    <property type="match status" value="1"/>
</dbReference>
<dbReference type="Gene3D" id="3.60.15.10">
    <property type="entry name" value="Ribonuclease Z/Hydroxyacylglutathione hydrolase-like"/>
    <property type="match status" value="1"/>
</dbReference>
<dbReference type="HAMAP" id="MF_01818">
    <property type="entry name" value="RNase_Z_BN"/>
    <property type="match status" value="1"/>
</dbReference>
<dbReference type="InterPro" id="IPR001279">
    <property type="entry name" value="Metallo-B-lactamas"/>
</dbReference>
<dbReference type="InterPro" id="IPR036866">
    <property type="entry name" value="RibonucZ/Hydroxyglut_hydro"/>
</dbReference>
<dbReference type="InterPro" id="IPR013469">
    <property type="entry name" value="Rnase_BN"/>
</dbReference>
<dbReference type="InterPro" id="IPR013471">
    <property type="entry name" value="RNase_Z/BN"/>
</dbReference>
<dbReference type="NCBIfam" id="NF000800">
    <property type="entry name" value="PRK00055.1-1"/>
    <property type="match status" value="1"/>
</dbReference>
<dbReference type="NCBIfam" id="NF000801">
    <property type="entry name" value="PRK00055.1-3"/>
    <property type="match status" value="1"/>
</dbReference>
<dbReference type="NCBIfam" id="TIGR02651">
    <property type="entry name" value="RNase_Z"/>
    <property type="match status" value="1"/>
</dbReference>
<dbReference type="NCBIfam" id="TIGR02649">
    <property type="entry name" value="true_RNase_BN"/>
    <property type="match status" value="1"/>
</dbReference>
<dbReference type="PANTHER" id="PTHR46018">
    <property type="entry name" value="ZINC PHOSPHODIESTERASE ELAC PROTEIN 1"/>
    <property type="match status" value="1"/>
</dbReference>
<dbReference type="PANTHER" id="PTHR46018:SF2">
    <property type="entry name" value="ZINC PHOSPHODIESTERASE ELAC PROTEIN 1"/>
    <property type="match status" value="1"/>
</dbReference>
<dbReference type="Pfam" id="PF12706">
    <property type="entry name" value="Lactamase_B_2"/>
    <property type="match status" value="2"/>
</dbReference>
<dbReference type="SMART" id="SM00849">
    <property type="entry name" value="Lactamase_B"/>
    <property type="match status" value="1"/>
</dbReference>
<dbReference type="SUPFAM" id="SSF56281">
    <property type="entry name" value="Metallo-hydrolase/oxidoreductase"/>
    <property type="match status" value="1"/>
</dbReference>
<sequence>MELIFLGTSAGVPTRTRNVTAILLNLQHPTQSGLWLFDCGEGTQHQLLHTAFNPGKLDKIFISHLHGDHLFGLPGLLCSRSMSGIIQPLTIYGPHGIREFVETALRISGSWTDYPLEIVEIGAGEIFDDGLRKVTAYPMEHPLECYGYRIEEHDKPGALNAQALKAAGVPPGPLFQELKAGKTIMLDDGRQINGADYLAVPVPGKALAIFGDTGPCDAALELAKGVDVMVHEATLDMAMEAKANSRGHSSTRQAAALAREAGVGKLIITHVSSRYDDKGCQHLLRECRSIFPATELANDFAVFSI</sequence>
<proteinExistence type="inferred from homology"/>
<feature type="chain" id="PRO_1000070279" description="Ribonuclease BN">
    <location>
        <begin position="1"/>
        <end position="305"/>
    </location>
</feature>
<feature type="active site" description="Proton acceptor" evidence="1">
    <location>
        <position position="68"/>
    </location>
</feature>
<feature type="binding site" evidence="1">
    <location>
        <position position="64"/>
    </location>
    <ligand>
        <name>Zn(2+)</name>
        <dbReference type="ChEBI" id="CHEBI:29105"/>
        <label>1</label>
        <note>catalytic</note>
    </ligand>
</feature>
<feature type="binding site" evidence="1">
    <location>
        <position position="66"/>
    </location>
    <ligand>
        <name>Zn(2+)</name>
        <dbReference type="ChEBI" id="CHEBI:29105"/>
        <label>1</label>
        <note>catalytic</note>
    </ligand>
</feature>
<feature type="binding site" evidence="1">
    <location>
        <position position="68"/>
    </location>
    <ligand>
        <name>Zn(2+)</name>
        <dbReference type="ChEBI" id="CHEBI:29105"/>
        <label>2</label>
        <note>catalytic</note>
    </ligand>
</feature>
<feature type="binding site" evidence="1">
    <location>
        <position position="69"/>
    </location>
    <ligand>
        <name>Zn(2+)</name>
        <dbReference type="ChEBI" id="CHEBI:29105"/>
        <label>2</label>
        <note>catalytic</note>
    </ligand>
</feature>
<feature type="binding site" evidence="1">
    <location>
        <position position="141"/>
    </location>
    <ligand>
        <name>Zn(2+)</name>
        <dbReference type="ChEBI" id="CHEBI:29105"/>
        <label>1</label>
        <note>catalytic</note>
    </ligand>
</feature>
<feature type="binding site" evidence="1">
    <location>
        <position position="212"/>
    </location>
    <ligand>
        <name>Zn(2+)</name>
        <dbReference type="ChEBI" id="CHEBI:29105"/>
        <label>1</label>
        <note>catalytic</note>
    </ligand>
</feature>
<feature type="binding site" evidence="1">
    <location>
        <position position="212"/>
    </location>
    <ligand>
        <name>Zn(2+)</name>
        <dbReference type="ChEBI" id="CHEBI:29105"/>
        <label>2</label>
        <note>catalytic</note>
    </ligand>
</feature>
<feature type="binding site" evidence="1">
    <location>
        <position position="270"/>
    </location>
    <ligand>
        <name>Zn(2+)</name>
        <dbReference type="ChEBI" id="CHEBI:29105"/>
        <label>2</label>
        <note>catalytic</note>
    </ligand>
</feature>
<name>RBN_ECOUT</name>
<gene>
    <name evidence="1" type="primary">rbn</name>
    <name type="synonym">rnz</name>
    <name type="ordered locus">UTI89_C2552</name>
</gene>
<evidence type="ECO:0000255" key="1">
    <source>
        <dbReference type="HAMAP-Rule" id="MF_01818"/>
    </source>
</evidence>
<organism>
    <name type="scientific">Escherichia coli (strain UTI89 / UPEC)</name>
    <dbReference type="NCBI Taxonomy" id="364106"/>
    <lineage>
        <taxon>Bacteria</taxon>
        <taxon>Pseudomonadati</taxon>
        <taxon>Pseudomonadota</taxon>
        <taxon>Gammaproteobacteria</taxon>
        <taxon>Enterobacterales</taxon>
        <taxon>Enterobacteriaceae</taxon>
        <taxon>Escherichia</taxon>
    </lineage>
</organism>